<reference key="1">
    <citation type="journal article" date="1997" name="Am. J. Bot.">
        <title>Chloroplast DNA phylogeny, reticulate evolution, and biogeography of Paeonia (Paeoniaceae).</title>
        <authorList>
            <person name="Sang T."/>
            <person name="Crawford D.J."/>
            <person name="Stuessy T.F."/>
        </authorList>
    </citation>
    <scope>NUCLEOTIDE SEQUENCE [GENOMIC DNA]</scope>
</reference>
<protein>
    <recommendedName>
        <fullName evidence="1">Maturase K</fullName>
    </recommendedName>
    <alternativeName>
        <fullName evidence="1">Intron maturase</fullName>
    </alternativeName>
</protein>
<accession>O46993</accession>
<sequence>MEKSQGYLELDKSWRHDFLYPLIFQEYIYALAHEQGLNRSILLENTDHDNKYSSLIVKRLITRMQQQNHFLIFDNDSNQNPFWKHNNNLYSQMISEGFVIIVEIPFSPRFVDSLEEKKKILKFNNLRSIHSIFPFLEDQILHLNFVSNILIPYPIHLEIVVQSLRYRVKDASSLHLLRFFLFTLNKSISSFSKRNPRLFLFLYNSHVYEYESTFLFLRNKTSHLRSTSSGAFLERIFFYGKIKHLIEVFANDFQAILWLFKDPFMHYVRYQGKSILASKRTSLRMNKWKYYLINFWQCQFYVWSQPGRVSINQLSNHSLDFLGYLSSVRLNPLAVRSQMLENSFLTDNAIKKFDIIVLLIPLIGSLAKAKFCNVLGHPLSKPARADSSDSDIIERFVRICRNLSHYHSGSSKKKSLYRIKYILRLSCARTLARKHKTAVRSFLKRLGSELLEEFLTEDGQVISLIFPRTSSTSWRLYRGGIWYLDITCINDLANHE</sequence>
<organism>
    <name type="scientific">Paeonia suffruticosa</name>
    <name type="common">Tree peony</name>
    <name type="synonym">Paeonia moutan</name>
    <dbReference type="NCBI Taxonomy" id="45171"/>
    <lineage>
        <taxon>Eukaryota</taxon>
        <taxon>Viridiplantae</taxon>
        <taxon>Streptophyta</taxon>
        <taxon>Embryophyta</taxon>
        <taxon>Tracheophyta</taxon>
        <taxon>Spermatophyta</taxon>
        <taxon>Magnoliopsida</taxon>
        <taxon>eudicotyledons</taxon>
        <taxon>Gunneridae</taxon>
        <taxon>Pentapetalae</taxon>
        <taxon>Saxifragales</taxon>
        <taxon>Paeoniaceae</taxon>
        <taxon>Paeonia</taxon>
    </lineage>
</organism>
<name>MATK_PAESU</name>
<feature type="chain" id="PRO_0000143571" description="Maturase K">
    <location>
        <begin position="1"/>
        <end position="496"/>
    </location>
</feature>
<proteinExistence type="inferred from homology"/>
<gene>
    <name evidence="1" type="primary">matK</name>
</gene>
<dbReference type="EMBL" id="AF033593">
    <property type="protein sequence ID" value="AAB92525.1"/>
    <property type="molecule type" value="Genomic_DNA"/>
</dbReference>
<dbReference type="SMR" id="O46993"/>
<dbReference type="GO" id="GO:0009507">
    <property type="term" value="C:chloroplast"/>
    <property type="evidence" value="ECO:0007669"/>
    <property type="project" value="UniProtKB-SubCell"/>
</dbReference>
<dbReference type="GO" id="GO:0003723">
    <property type="term" value="F:RNA binding"/>
    <property type="evidence" value="ECO:0007669"/>
    <property type="project" value="UniProtKB-KW"/>
</dbReference>
<dbReference type="GO" id="GO:0006397">
    <property type="term" value="P:mRNA processing"/>
    <property type="evidence" value="ECO:0007669"/>
    <property type="project" value="UniProtKB-KW"/>
</dbReference>
<dbReference type="GO" id="GO:0008380">
    <property type="term" value="P:RNA splicing"/>
    <property type="evidence" value="ECO:0007669"/>
    <property type="project" value="UniProtKB-UniRule"/>
</dbReference>
<dbReference type="GO" id="GO:0008033">
    <property type="term" value="P:tRNA processing"/>
    <property type="evidence" value="ECO:0007669"/>
    <property type="project" value="UniProtKB-KW"/>
</dbReference>
<dbReference type="HAMAP" id="MF_01390">
    <property type="entry name" value="MatK"/>
    <property type="match status" value="1"/>
</dbReference>
<dbReference type="InterPro" id="IPR024937">
    <property type="entry name" value="Domain_X"/>
</dbReference>
<dbReference type="InterPro" id="IPR002866">
    <property type="entry name" value="Maturase_MatK"/>
</dbReference>
<dbReference type="InterPro" id="IPR024942">
    <property type="entry name" value="Maturase_MatK_N"/>
</dbReference>
<dbReference type="PANTHER" id="PTHR34811">
    <property type="entry name" value="MATURASE K"/>
    <property type="match status" value="1"/>
</dbReference>
<dbReference type="PANTHER" id="PTHR34811:SF1">
    <property type="entry name" value="MATURASE K"/>
    <property type="match status" value="1"/>
</dbReference>
<dbReference type="Pfam" id="PF01348">
    <property type="entry name" value="Intron_maturas2"/>
    <property type="match status" value="1"/>
</dbReference>
<dbReference type="Pfam" id="PF01824">
    <property type="entry name" value="MatK_N"/>
    <property type="match status" value="1"/>
</dbReference>
<keyword id="KW-0150">Chloroplast</keyword>
<keyword id="KW-0507">mRNA processing</keyword>
<keyword id="KW-0934">Plastid</keyword>
<keyword id="KW-0694">RNA-binding</keyword>
<keyword id="KW-0819">tRNA processing</keyword>
<evidence type="ECO:0000255" key="1">
    <source>
        <dbReference type="HAMAP-Rule" id="MF_01390"/>
    </source>
</evidence>
<geneLocation type="chloroplast"/>
<comment type="function">
    <text evidence="1">Usually encoded in the trnK tRNA gene intron. Probably assists in splicing its own and other chloroplast group II introns.</text>
</comment>
<comment type="subcellular location">
    <subcellularLocation>
        <location>Plastid</location>
        <location>Chloroplast</location>
    </subcellularLocation>
</comment>
<comment type="similarity">
    <text evidence="1">Belongs to the intron maturase 2 family. MatK subfamily.</text>
</comment>